<sequence length="509" mass="55704">MSSHIQIFDTTLRDGEQTPGVNFTFDERLRIALQLEKWGVDVIEAGFPASSTGSFKSVQAIAQTLTTTAVCGLARCKKSDIDAVYEATKDAAKPVVHVFIATSPIHLEHKLKMSQEDVLASIKEHVTYAKQLFDVVQFSPEDATRTELPFLVKCVQTAVDAGATVINIPDTVGYSYHDEYAHIFKTLTESVTSSNEIIYSAHCHDDLGMAVSNSLAAIEGGARRIEGTVNGIGERAGNAALEEVALALYVRNDHYGAQTALNLEETKKTSDLISRYAGIRVPRNKAIVGQNAFSHESGIHQDGVLKHRETYEIMTPQLVGVSTTELPLGKLSGKHAFSEKLKALGYNIDKEAQIDLFKQFKTIADKKKSVSDRDIHAIIQGSEHEHQALYKLETLQLQYVSSGLQSAVVVVKDKEGHIYQDSSIGTGSIVAIYNAVDRIFQKETELIDYRINSVTEGTDAQAEVHVNLLIEGKTVNGFGIDHDILQASCKAYVEAHAKFAAENVEKVGN</sequence>
<gene>
    <name evidence="1" type="primary">leuA</name>
    <name type="ordered locus">SAHV_2042</name>
</gene>
<evidence type="ECO:0000255" key="1">
    <source>
        <dbReference type="HAMAP-Rule" id="MF_01025"/>
    </source>
</evidence>
<dbReference type="EC" id="2.3.3.13" evidence="1"/>
<dbReference type="EMBL" id="AP009324">
    <property type="protein sequence ID" value="BAF78925.1"/>
    <property type="molecule type" value="Genomic_DNA"/>
</dbReference>
<dbReference type="RefSeq" id="WP_000094583.1">
    <property type="nucleotide sequence ID" value="NC_009782.1"/>
</dbReference>
<dbReference type="SMR" id="A7X4N1"/>
<dbReference type="KEGG" id="saw:SAHV_2042"/>
<dbReference type="HOGENOM" id="CLU_022158_0_1_9"/>
<dbReference type="UniPathway" id="UPA00048">
    <property type="reaction ID" value="UER00070"/>
</dbReference>
<dbReference type="GO" id="GO:0005737">
    <property type="term" value="C:cytoplasm"/>
    <property type="evidence" value="ECO:0007669"/>
    <property type="project" value="UniProtKB-SubCell"/>
</dbReference>
<dbReference type="GO" id="GO:0003852">
    <property type="term" value="F:2-isopropylmalate synthase activity"/>
    <property type="evidence" value="ECO:0007669"/>
    <property type="project" value="UniProtKB-UniRule"/>
</dbReference>
<dbReference type="GO" id="GO:0003985">
    <property type="term" value="F:acetyl-CoA C-acetyltransferase activity"/>
    <property type="evidence" value="ECO:0007669"/>
    <property type="project" value="UniProtKB-UniRule"/>
</dbReference>
<dbReference type="GO" id="GO:0030145">
    <property type="term" value="F:manganese ion binding"/>
    <property type="evidence" value="ECO:0007669"/>
    <property type="project" value="UniProtKB-UniRule"/>
</dbReference>
<dbReference type="GO" id="GO:0009098">
    <property type="term" value="P:L-leucine biosynthetic process"/>
    <property type="evidence" value="ECO:0007669"/>
    <property type="project" value="UniProtKB-UniRule"/>
</dbReference>
<dbReference type="CDD" id="cd07940">
    <property type="entry name" value="DRE_TIM_IPMS"/>
    <property type="match status" value="1"/>
</dbReference>
<dbReference type="FunFam" id="1.10.238.260:FF:000001">
    <property type="entry name" value="2-isopropylmalate synthase"/>
    <property type="match status" value="1"/>
</dbReference>
<dbReference type="FunFam" id="3.20.20.70:FF:000010">
    <property type="entry name" value="2-isopropylmalate synthase"/>
    <property type="match status" value="1"/>
</dbReference>
<dbReference type="FunFam" id="3.30.160.270:FF:000003">
    <property type="entry name" value="2-isopropylmalate synthase"/>
    <property type="match status" value="1"/>
</dbReference>
<dbReference type="Gene3D" id="1.10.238.260">
    <property type="match status" value="1"/>
</dbReference>
<dbReference type="Gene3D" id="3.30.160.270">
    <property type="match status" value="1"/>
</dbReference>
<dbReference type="Gene3D" id="3.20.20.70">
    <property type="entry name" value="Aldolase class I"/>
    <property type="match status" value="1"/>
</dbReference>
<dbReference type="HAMAP" id="MF_01025">
    <property type="entry name" value="LeuA_type1"/>
    <property type="match status" value="1"/>
</dbReference>
<dbReference type="InterPro" id="IPR050073">
    <property type="entry name" value="2-IPM_HCS-like"/>
</dbReference>
<dbReference type="InterPro" id="IPR013709">
    <property type="entry name" value="2-isopropylmalate_synth_dimer"/>
</dbReference>
<dbReference type="InterPro" id="IPR013785">
    <property type="entry name" value="Aldolase_TIM"/>
</dbReference>
<dbReference type="InterPro" id="IPR054691">
    <property type="entry name" value="LeuA/HCS_post-cat"/>
</dbReference>
<dbReference type="InterPro" id="IPR036230">
    <property type="entry name" value="LeuA_allosteric_dom_sf"/>
</dbReference>
<dbReference type="InterPro" id="IPR005671">
    <property type="entry name" value="LeuA_bact_synth"/>
</dbReference>
<dbReference type="InterPro" id="IPR000891">
    <property type="entry name" value="PYR_CT"/>
</dbReference>
<dbReference type="NCBIfam" id="TIGR00973">
    <property type="entry name" value="leuA_bact"/>
    <property type="match status" value="1"/>
</dbReference>
<dbReference type="NCBIfam" id="NF002086">
    <property type="entry name" value="PRK00915.1-3"/>
    <property type="match status" value="1"/>
</dbReference>
<dbReference type="NCBIfam" id="NF002088">
    <property type="entry name" value="PRK00915.1-5"/>
    <property type="match status" value="1"/>
</dbReference>
<dbReference type="PANTHER" id="PTHR10277:SF9">
    <property type="entry name" value="2-ISOPROPYLMALATE SYNTHASE 1, CHLOROPLASTIC-RELATED"/>
    <property type="match status" value="1"/>
</dbReference>
<dbReference type="PANTHER" id="PTHR10277">
    <property type="entry name" value="HOMOCITRATE SYNTHASE-RELATED"/>
    <property type="match status" value="1"/>
</dbReference>
<dbReference type="Pfam" id="PF22617">
    <property type="entry name" value="HCS_D2"/>
    <property type="match status" value="1"/>
</dbReference>
<dbReference type="Pfam" id="PF00682">
    <property type="entry name" value="HMGL-like"/>
    <property type="match status" value="1"/>
</dbReference>
<dbReference type="Pfam" id="PF08502">
    <property type="entry name" value="LeuA_dimer"/>
    <property type="match status" value="1"/>
</dbReference>
<dbReference type="SMART" id="SM00917">
    <property type="entry name" value="LeuA_dimer"/>
    <property type="match status" value="1"/>
</dbReference>
<dbReference type="SUPFAM" id="SSF110921">
    <property type="entry name" value="2-isopropylmalate synthase LeuA, allosteric (dimerisation) domain"/>
    <property type="match status" value="1"/>
</dbReference>
<dbReference type="SUPFAM" id="SSF51569">
    <property type="entry name" value="Aldolase"/>
    <property type="match status" value="1"/>
</dbReference>
<dbReference type="PROSITE" id="PS50991">
    <property type="entry name" value="PYR_CT"/>
    <property type="match status" value="1"/>
</dbReference>
<name>LEU1_STAA1</name>
<feature type="chain" id="PRO_1000149301" description="2-isopropylmalate synthase">
    <location>
        <begin position="1"/>
        <end position="509"/>
    </location>
</feature>
<feature type="domain" description="Pyruvate carboxyltransferase" evidence="1">
    <location>
        <begin position="5"/>
        <end position="267"/>
    </location>
</feature>
<feature type="region of interest" description="Regulatory domain" evidence="1">
    <location>
        <begin position="391"/>
        <end position="509"/>
    </location>
</feature>
<feature type="binding site" evidence="1">
    <location>
        <position position="14"/>
    </location>
    <ligand>
        <name>Mn(2+)</name>
        <dbReference type="ChEBI" id="CHEBI:29035"/>
    </ligand>
</feature>
<feature type="binding site" evidence="1">
    <location>
        <position position="202"/>
    </location>
    <ligand>
        <name>Mn(2+)</name>
        <dbReference type="ChEBI" id="CHEBI:29035"/>
    </ligand>
</feature>
<feature type="binding site" evidence="1">
    <location>
        <position position="204"/>
    </location>
    <ligand>
        <name>Mn(2+)</name>
        <dbReference type="ChEBI" id="CHEBI:29035"/>
    </ligand>
</feature>
<feature type="binding site" evidence="1">
    <location>
        <position position="238"/>
    </location>
    <ligand>
        <name>Mn(2+)</name>
        <dbReference type="ChEBI" id="CHEBI:29035"/>
    </ligand>
</feature>
<organism>
    <name type="scientific">Staphylococcus aureus (strain Mu3 / ATCC 700698)</name>
    <dbReference type="NCBI Taxonomy" id="418127"/>
    <lineage>
        <taxon>Bacteria</taxon>
        <taxon>Bacillati</taxon>
        <taxon>Bacillota</taxon>
        <taxon>Bacilli</taxon>
        <taxon>Bacillales</taxon>
        <taxon>Staphylococcaceae</taxon>
        <taxon>Staphylococcus</taxon>
    </lineage>
</organism>
<proteinExistence type="inferred from homology"/>
<reference key="1">
    <citation type="journal article" date="2008" name="Antimicrob. Agents Chemother.">
        <title>Mutated response regulator graR is responsible for phenotypic conversion of Staphylococcus aureus from heterogeneous vancomycin-intermediate resistance to vancomycin-intermediate resistance.</title>
        <authorList>
            <person name="Neoh H.-M."/>
            <person name="Cui L."/>
            <person name="Yuzawa H."/>
            <person name="Takeuchi F."/>
            <person name="Matsuo M."/>
            <person name="Hiramatsu K."/>
        </authorList>
    </citation>
    <scope>NUCLEOTIDE SEQUENCE [LARGE SCALE GENOMIC DNA]</scope>
    <source>
        <strain>Mu3 / ATCC 700698</strain>
    </source>
</reference>
<comment type="function">
    <text evidence="1">Catalyzes the condensation of the acetyl group of acetyl-CoA with 3-methyl-2-oxobutanoate (2-ketoisovalerate) to form 3-carboxy-3-hydroxy-4-methylpentanoate (2-isopropylmalate).</text>
</comment>
<comment type="catalytic activity">
    <reaction evidence="1">
        <text>3-methyl-2-oxobutanoate + acetyl-CoA + H2O = (2S)-2-isopropylmalate + CoA + H(+)</text>
        <dbReference type="Rhea" id="RHEA:21524"/>
        <dbReference type="ChEBI" id="CHEBI:1178"/>
        <dbReference type="ChEBI" id="CHEBI:11851"/>
        <dbReference type="ChEBI" id="CHEBI:15377"/>
        <dbReference type="ChEBI" id="CHEBI:15378"/>
        <dbReference type="ChEBI" id="CHEBI:57287"/>
        <dbReference type="ChEBI" id="CHEBI:57288"/>
        <dbReference type="EC" id="2.3.3.13"/>
    </reaction>
</comment>
<comment type="cofactor">
    <cofactor evidence="1">
        <name>Mn(2+)</name>
        <dbReference type="ChEBI" id="CHEBI:29035"/>
    </cofactor>
</comment>
<comment type="pathway">
    <text evidence="1">Amino-acid biosynthesis; L-leucine biosynthesis; L-leucine from 3-methyl-2-oxobutanoate: step 1/4.</text>
</comment>
<comment type="subunit">
    <text evidence="1">Homodimer.</text>
</comment>
<comment type="subcellular location">
    <subcellularLocation>
        <location evidence="1">Cytoplasm</location>
    </subcellularLocation>
</comment>
<comment type="similarity">
    <text evidence="1">Belongs to the alpha-IPM synthase/homocitrate synthase family. LeuA type 1 subfamily.</text>
</comment>
<keyword id="KW-0028">Amino-acid biosynthesis</keyword>
<keyword id="KW-0100">Branched-chain amino acid biosynthesis</keyword>
<keyword id="KW-0963">Cytoplasm</keyword>
<keyword id="KW-0432">Leucine biosynthesis</keyword>
<keyword id="KW-0464">Manganese</keyword>
<keyword id="KW-0479">Metal-binding</keyword>
<keyword id="KW-0808">Transferase</keyword>
<accession>A7X4N1</accession>
<protein>
    <recommendedName>
        <fullName evidence="1">2-isopropylmalate synthase</fullName>
        <ecNumber evidence="1">2.3.3.13</ecNumber>
    </recommendedName>
    <alternativeName>
        <fullName evidence="1">Alpha-IPM synthase</fullName>
    </alternativeName>
    <alternativeName>
        <fullName evidence="1">Alpha-isopropylmalate synthase</fullName>
    </alternativeName>
</protein>